<proteinExistence type="evidence at protein level"/>
<feature type="chain" id="PRO_0000072141" description="Sporulation-specific protein 73">
    <location>
        <begin position="1"/>
        <end position="143"/>
    </location>
</feature>
<feature type="mutagenesis site" description="In Spo73AAA; disrupts localization to the prospore membrane; when associated with A-121 and A-123." evidence="4">
    <original>R</original>
    <variation>A</variation>
    <location>
        <position position="119"/>
    </location>
</feature>
<feature type="mutagenesis site" description="In Spo73AAA; disrupts localization to the prospore membrane; when associated with A-119 and A-123." evidence="4">
    <original>K</original>
    <variation>A</variation>
    <location>
        <position position="121"/>
    </location>
</feature>
<feature type="mutagenesis site" description="In Spo73AAA; disrupts localization to the prospore membrane; when associated with A-119 and A-121." evidence="4">
    <original>K</original>
    <variation>A</variation>
    <location>
        <position position="123"/>
    </location>
</feature>
<reference key="1">
    <citation type="journal article" date="1997" name="Nature">
        <title>The nucleotide sequence of Saccharomyces cerevisiae chromosome V.</title>
        <authorList>
            <person name="Dietrich F.S."/>
            <person name="Mulligan J.T."/>
            <person name="Hennessy K.M."/>
            <person name="Yelton M.A."/>
            <person name="Allen E."/>
            <person name="Araujo R."/>
            <person name="Aviles E."/>
            <person name="Berno A."/>
            <person name="Brennan T."/>
            <person name="Carpenter J."/>
            <person name="Chen E."/>
            <person name="Cherry J.M."/>
            <person name="Chung E."/>
            <person name="Duncan M."/>
            <person name="Guzman E."/>
            <person name="Hartzell G."/>
            <person name="Hunicke-Smith S."/>
            <person name="Hyman R.W."/>
            <person name="Kayser A."/>
            <person name="Komp C."/>
            <person name="Lashkari D."/>
            <person name="Lew H."/>
            <person name="Lin D."/>
            <person name="Mosedale D."/>
            <person name="Nakahara K."/>
            <person name="Namath A."/>
            <person name="Norgren R."/>
            <person name="Oefner P."/>
            <person name="Oh C."/>
            <person name="Petel F.X."/>
            <person name="Roberts D."/>
            <person name="Sehl P."/>
            <person name="Schramm S."/>
            <person name="Shogren T."/>
            <person name="Smith V."/>
            <person name="Taylor P."/>
            <person name="Wei Y."/>
            <person name="Botstein D."/>
            <person name="Davis R.W."/>
        </authorList>
    </citation>
    <scope>NUCLEOTIDE SEQUENCE [LARGE SCALE GENOMIC DNA]</scope>
    <source>
        <strain>ATCC 204508 / S288c</strain>
    </source>
</reference>
<reference key="2">
    <citation type="journal article" date="2014" name="G3 (Bethesda)">
        <title>The reference genome sequence of Saccharomyces cerevisiae: Then and now.</title>
        <authorList>
            <person name="Engel S.R."/>
            <person name="Dietrich F.S."/>
            <person name="Fisk D.G."/>
            <person name="Binkley G."/>
            <person name="Balakrishnan R."/>
            <person name="Costanzo M.C."/>
            <person name="Dwight S.S."/>
            <person name="Hitz B.C."/>
            <person name="Karra K."/>
            <person name="Nash R.S."/>
            <person name="Weng S."/>
            <person name="Wong E.D."/>
            <person name="Lloyd P."/>
            <person name="Skrzypek M.S."/>
            <person name="Miyasato S.R."/>
            <person name="Simison M."/>
            <person name="Cherry J.M."/>
        </authorList>
    </citation>
    <scope>GENOME REANNOTATION</scope>
    <source>
        <strain>ATCC 204508 / S288c</strain>
    </source>
</reference>
<reference key="3">
    <citation type="journal article" date="2007" name="Genome Res.">
        <title>Approaching a complete repository of sequence-verified protein-encoding clones for Saccharomyces cerevisiae.</title>
        <authorList>
            <person name="Hu Y."/>
            <person name="Rolfs A."/>
            <person name="Bhullar B."/>
            <person name="Murthy T.V.S."/>
            <person name="Zhu C."/>
            <person name="Berger M.F."/>
            <person name="Camargo A.A."/>
            <person name="Kelley F."/>
            <person name="McCarron S."/>
            <person name="Jepson D."/>
            <person name="Richardson A."/>
            <person name="Raphael J."/>
            <person name="Moreira D."/>
            <person name="Taycher E."/>
            <person name="Zuo D."/>
            <person name="Mohr S."/>
            <person name="Kane M.F."/>
            <person name="Williamson J."/>
            <person name="Simpson A.J.G."/>
            <person name="Bulyk M.L."/>
            <person name="Harlow E."/>
            <person name="Marsischky G."/>
            <person name="Kolodner R.D."/>
            <person name="LaBaer J."/>
        </authorList>
    </citation>
    <scope>NUCLEOTIDE SEQUENCE [GENOMIC DNA]</scope>
    <source>
        <strain>ATCC 204508 / S288c</strain>
    </source>
</reference>
<reference key="4">
    <citation type="journal article" date="2001" name="Curr. Biol.">
        <title>A screen for genes required for meiosis and spore formation based on whole-genome expression.</title>
        <authorList>
            <person name="Rabitsch K.P."/>
            <person name="Toth A."/>
            <person name="Galova M."/>
            <person name="Schleiffer A."/>
            <person name="Schaffner G."/>
            <person name="Aigner E."/>
            <person name="Rupp C."/>
            <person name="Penkner A.M."/>
            <person name="Moreno-Borchart A.C."/>
            <person name="Primig M."/>
            <person name="Esposito R.E."/>
            <person name="Klein F."/>
            <person name="Knop M."/>
            <person name="Nasmyth K."/>
        </authorList>
    </citation>
    <scope>FUNCTION</scope>
</reference>
<reference key="5">
    <citation type="journal article" date="2004" name="Eukaryot. Cell">
        <title>Morphogenetic pathway of spore wall assembly in Saccharomyces cerevisiae.</title>
        <authorList>
            <person name="Coluccio A."/>
            <person name="Bogengruber E."/>
            <person name="Conrad M.N."/>
            <person name="Dresser M.E."/>
            <person name="Briza P."/>
            <person name="Neiman A.M."/>
        </authorList>
    </citation>
    <scope>FUNCTION</scope>
    <scope>SUBCELLULAR LOCATION</scope>
</reference>
<reference key="6">
    <citation type="journal article" date="2015" name="PLoS ONE">
        <title>SPO73 and SPO71 function cooperatively in prospore membrane elongation during sporulation in Saccharomyces cerevisiae.</title>
        <authorList>
            <person name="Parodi E.M."/>
            <person name="Roesner J.M."/>
            <person name="Huang L.S."/>
        </authorList>
    </citation>
    <scope>FUNCTION</scope>
    <scope>SUBCELLULAR LOCATION</scope>
    <scope>INTERACTION WITH SPO71</scope>
</reference>
<reference key="7">
    <citation type="journal article" date="2016" name="MSphere">
        <title>The dysferlin domain-only protein, Spo73, is required for prospore membrane extension in Saccharomyces cerevisiae.</title>
        <authorList>
            <person name="Okumura Y."/>
            <person name="Nakamura T.S."/>
            <person name="Tanaka T."/>
            <person name="Inoue I."/>
            <person name="Suda Y."/>
            <person name="Takahashi T."/>
            <person name="Nakanishi H."/>
            <person name="Nakamura S."/>
            <person name="Gao X.D."/>
            <person name="Tachikawa H."/>
        </authorList>
    </citation>
    <scope>FUNCTION</scope>
    <scope>SUBCELLULAR LOCATION</scope>
    <scope>MUTAGENESIS OF ARG-119; LYS-121 AND LYS-123</scope>
</reference>
<reference key="8">
    <citation type="journal article" date="2018" name="J. Proteome Res.">
        <title>Enrichment-based proteogenomics identifies microproteins, missing proteins, and novel smORFs in Saccharomyces cerevisiae.</title>
        <authorList>
            <person name="He C."/>
            <person name="Jia C."/>
            <person name="Zhang Y."/>
            <person name="Xu P."/>
        </authorList>
    </citation>
    <scope>IDENTIFICATION BY MASS SPECTROMETRY</scope>
</reference>
<evidence type="ECO:0000269" key="1">
    <source>
    </source>
</evidence>
<evidence type="ECO:0000269" key="2">
    <source>
    </source>
</evidence>
<evidence type="ECO:0000269" key="3">
    <source>
    </source>
</evidence>
<evidence type="ECO:0000269" key="4">
    <source>
    </source>
</evidence>
<evidence type="ECO:0000303" key="5">
    <source>
    </source>
</evidence>
<evidence type="ECO:0000305" key="6"/>
<evidence type="ECO:0000305" key="7">
    <source>
    </source>
</evidence>
<evidence type="ECO:0000305" key="8">
    <source>
    </source>
</evidence>
<evidence type="ECO:0000312" key="9">
    <source>
        <dbReference type="SGD" id="S000000848"/>
    </source>
</evidence>
<keyword id="KW-0963">Cytoplasm</keyword>
<keyword id="KW-0472">Membrane</keyword>
<keyword id="KW-1185">Reference proteome</keyword>
<keyword id="KW-0749">Sporulation</keyword>
<name>SPO73_YEAST</name>
<sequence length="143" mass="16598">MGKNHFLKDFSALPEDVLIENERGITLLGYPLFSPKILLPHVDPPQFQRLNTENGSLIALSKNTISNFIELYPIDLSTERTAGSSSSQMTKWFVLMDYKEKYDIDDQGWCYSWNFNNSRWKSKNGLVRRRVWVRLPTTSHGLD</sequence>
<gene>
    <name evidence="5" type="primary">SPO73</name>
    <name evidence="9" type="ordered locus">YER046W</name>
</gene>
<protein>
    <recommendedName>
        <fullName evidence="6">Sporulation-specific protein 73</fullName>
    </recommendedName>
</protein>
<comment type="function">
    <text evidence="1 2 3 4">Required for spore wall assembly and ascus formation (PubMed:11470404, PubMed:15590821). Involved in the formation and elongation of prospore membranes (PubMed:26605945, PubMed:27303688).</text>
</comment>
<comment type="subunit">
    <text evidence="3">Interacts with SPO71.</text>
</comment>
<comment type="subcellular location">
    <subcellularLocation>
        <location evidence="2">Cytoplasm</location>
    </subcellularLocation>
    <subcellularLocation>
        <location evidence="3 4">Prospore membrane</location>
        <topology evidence="7 8">Peripheral membrane protein</topology>
    </subcellularLocation>
    <text evidence="2">Punctate location throughout the cytosol in meiosis II cells and peripheral punctate structures in the spore.</text>
</comment>
<comment type="similarity">
    <text evidence="6">Belongs to the SPO73 family.</text>
</comment>
<accession>P40031</accession>
<accession>D3DLU7</accession>
<organism>
    <name type="scientific">Saccharomyces cerevisiae (strain ATCC 204508 / S288c)</name>
    <name type="common">Baker's yeast</name>
    <dbReference type="NCBI Taxonomy" id="559292"/>
    <lineage>
        <taxon>Eukaryota</taxon>
        <taxon>Fungi</taxon>
        <taxon>Dikarya</taxon>
        <taxon>Ascomycota</taxon>
        <taxon>Saccharomycotina</taxon>
        <taxon>Saccharomycetes</taxon>
        <taxon>Saccharomycetales</taxon>
        <taxon>Saccharomycetaceae</taxon>
        <taxon>Saccharomyces</taxon>
    </lineage>
</organism>
<dbReference type="EMBL" id="U18796">
    <property type="protein sequence ID" value="AAB64581.1"/>
    <property type="molecule type" value="Genomic_DNA"/>
</dbReference>
<dbReference type="EMBL" id="AY558454">
    <property type="protein sequence ID" value="AAS56780.1"/>
    <property type="molecule type" value="Genomic_DNA"/>
</dbReference>
<dbReference type="EMBL" id="BK006939">
    <property type="protein sequence ID" value="DAA07701.1"/>
    <property type="molecule type" value="Genomic_DNA"/>
</dbReference>
<dbReference type="PIR" id="S50549">
    <property type="entry name" value="S50549"/>
</dbReference>
<dbReference type="RefSeq" id="NP_010965.1">
    <property type="nucleotide sequence ID" value="NM_001178937.1"/>
</dbReference>
<dbReference type="BioGRID" id="36783">
    <property type="interactions" value="58"/>
</dbReference>
<dbReference type="FunCoup" id="P40031">
    <property type="interactions" value="53"/>
</dbReference>
<dbReference type="STRING" id="4932.YER046W"/>
<dbReference type="TCDB" id="3.A.20.1.5">
    <property type="family name" value="the peroxisomal protein importer (ppi) family"/>
</dbReference>
<dbReference type="iPTMnet" id="P40031"/>
<dbReference type="PaxDb" id="4932-YER046W"/>
<dbReference type="PeptideAtlas" id="P40031"/>
<dbReference type="EnsemblFungi" id="YER046W_mRNA">
    <property type="protein sequence ID" value="YER046W"/>
    <property type="gene ID" value="YER046W"/>
</dbReference>
<dbReference type="GeneID" id="856770"/>
<dbReference type="KEGG" id="sce:YER046W"/>
<dbReference type="AGR" id="SGD:S000000848"/>
<dbReference type="SGD" id="S000000848">
    <property type="gene designation" value="SPO73"/>
</dbReference>
<dbReference type="VEuPathDB" id="FungiDB:YER046W"/>
<dbReference type="eggNOG" id="ENOG502S49X">
    <property type="taxonomic scope" value="Eukaryota"/>
</dbReference>
<dbReference type="HOGENOM" id="CLU_1778715_0_0_1"/>
<dbReference type="InParanoid" id="P40031"/>
<dbReference type="OMA" id="DQGWFYS"/>
<dbReference type="OrthoDB" id="72441at2759"/>
<dbReference type="BioCyc" id="YEAST:G3O-30225-MONOMER"/>
<dbReference type="BioGRID-ORCS" id="856770">
    <property type="hits" value="1 hit in 10 CRISPR screens"/>
</dbReference>
<dbReference type="ChiTaRS" id="SPO73">
    <property type="organism name" value="yeast"/>
</dbReference>
<dbReference type="PRO" id="PR:P40031"/>
<dbReference type="Proteomes" id="UP000002311">
    <property type="component" value="Chromosome V"/>
</dbReference>
<dbReference type="RNAct" id="P40031">
    <property type="molecule type" value="protein"/>
</dbReference>
<dbReference type="GO" id="GO:0005829">
    <property type="term" value="C:cytosol"/>
    <property type="evidence" value="ECO:0000314"/>
    <property type="project" value="SGD"/>
</dbReference>
<dbReference type="GO" id="GO:0005628">
    <property type="term" value="C:prospore membrane"/>
    <property type="evidence" value="ECO:0000314"/>
    <property type="project" value="SGD"/>
</dbReference>
<dbReference type="GO" id="GO:0030437">
    <property type="term" value="P:ascospore formation"/>
    <property type="evidence" value="ECO:0000315"/>
    <property type="project" value="SGD"/>
</dbReference>
<dbReference type="GO" id="GO:0030476">
    <property type="term" value="P:ascospore wall assembly"/>
    <property type="evidence" value="ECO:0000315"/>
    <property type="project" value="SGD"/>
</dbReference>
<dbReference type="GO" id="GO:0032120">
    <property type="term" value="P:ascospore-type prospore membrane formation"/>
    <property type="evidence" value="ECO:0000315"/>
    <property type="project" value="SGD"/>
</dbReference>
<dbReference type="InterPro" id="IPR006614">
    <property type="entry name" value="Peroxin/Ferlin"/>
</dbReference>
<dbReference type="SMART" id="SM00694">
    <property type="entry name" value="DysFC"/>
    <property type="match status" value="1"/>
</dbReference>